<reference key="1">
    <citation type="journal article" date="2000" name="DNA Res.">
        <title>Structural analysis of Arabidopsis thaliana chromosome 5. X. Sequence features of the regions of 3,076,755 bp covered by sixty P1 and TAC clones.</title>
        <authorList>
            <person name="Sato S."/>
            <person name="Nakamura Y."/>
            <person name="Kaneko T."/>
            <person name="Katoh T."/>
            <person name="Asamizu E."/>
            <person name="Kotani H."/>
            <person name="Tabata S."/>
        </authorList>
    </citation>
    <scope>NUCLEOTIDE SEQUENCE [LARGE SCALE GENOMIC DNA]</scope>
    <source>
        <strain>cv. Columbia</strain>
    </source>
</reference>
<reference key="2">
    <citation type="journal article" date="2017" name="Plant J.">
        <title>Araport11: a complete reannotation of the Arabidopsis thaliana reference genome.</title>
        <authorList>
            <person name="Cheng C.Y."/>
            <person name="Krishnakumar V."/>
            <person name="Chan A.P."/>
            <person name="Thibaud-Nissen F."/>
            <person name="Schobel S."/>
            <person name="Town C.D."/>
        </authorList>
    </citation>
    <scope>GENOME REANNOTATION</scope>
    <source>
        <strain>cv. Columbia</strain>
    </source>
</reference>
<reference key="3">
    <citation type="submission" date="2005-05" db="EMBL/GenBank/DDBJ databases">
        <authorList>
            <person name="Underwood B.A."/>
            <person name="Xiao Y.-L."/>
            <person name="Moskal W.A. Jr."/>
            <person name="Monaghan E.L."/>
            <person name="Wang W."/>
            <person name="Redman J.C."/>
            <person name="Wu H.C."/>
            <person name="Utterback T."/>
            <person name="Town C.D."/>
        </authorList>
    </citation>
    <scope>NUCLEOTIDE SEQUENCE [LARGE SCALE MRNA] OF 27-326</scope>
    <source>
        <strain>cv. Columbia</strain>
    </source>
</reference>
<reference key="4">
    <citation type="journal article" date="2008" name="Trends Plant Sci.">
        <title>The plant B3 superfamily.</title>
        <authorList>
            <person name="Swaminathan K."/>
            <person name="Peterson K."/>
            <person name="Jack T."/>
        </authorList>
    </citation>
    <scope>GENE FAMILY</scope>
</reference>
<dbReference type="EMBL" id="AB019231">
    <property type="protein sequence ID" value="BAA96942.1"/>
    <property type="molecule type" value="Genomic_DNA"/>
</dbReference>
<dbReference type="EMBL" id="CP002688">
    <property type="protein sequence ID" value="AED97282.2"/>
    <property type="molecule type" value="Genomic_DNA"/>
</dbReference>
<dbReference type="EMBL" id="CP002688">
    <property type="protein sequence ID" value="AED97283.1"/>
    <property type="status" value="ALT_SEQ"/>
    <property type="molecule type" value="Genomic_DNA"/>
</dbReference>
<dbReference type="EMBL" id="DQ056730">
    <property type="protein sequence ID" value="AAY78874.1"/>
    <property type="molecule type" value="mRNA"/>
</dbReference>
<dbReference type="RefSeq" id="NP_001190577.1">
    <property type="nucleotide sequence ID" value="NM_001203648.1"/>
</dbReference>
<dbReference type="RefSeq" id="NP_001318844.1">
    <molecule id="Q9LVG1-1"/>
    <property type="nucleotide sequence ID" value="NM_001345394.1"/>
</dbReference>
<dbReference type="RefSeq" id="NP_001330294.1">
    <property type="nucleotide sequence ID" value="NM_001345395.1"/>
</dbReference>
<dbReference type="SMR" id="Q9LVG1"/>
<dbReference type="BioGRID" id="21379">
    <property type="interactions" value="1"/>
</dbReference>
<dbReference type="FunCoup" id="Q9LVG1">
    <property type="interactions" value="3"/>
</dbReference>
<dbReference type="IntAct" id="Q9LVG1">
    <property type="interactions" value="1"/>
</dbReference>
<dbReference type="STRING" id="3702.Q9LVG1"/>
<dbReference type="iPTMnet" id="Q9LVG1"/>
<dbReference type="EnsemblPlants" id="AT5G60130.1">
    <molecule id="Q9LVG1-1"/>
    <property type="protein sequence ID" value="AT5G60130.1"/>
    <property type="gene ID" value="AT5G60130"/>
</dbReference>
<dbReference type="GeneID" id="836135"/>
<dbReference type="Gramene" id="AT5G60130.1">
    <molecule id="Q9LVG1-1"/>
    <property type="protein sequence ID" value="AT5G60130.1"/>
    <property type="gene ID" value="AT5G60130"/>
</dbReference>
<dbReference type="KEGG" id="ath:AT5G60130"/>
<dbReference type="Araport" id="AT5G60130"/>
<dbReference type="TAIR" id="AT5G60130"/>
<dbReference type="eggNOG" id="ENOG502S4ID">
    <property type="taxonomic scope" value="Eukaryota"/>
</dbReference>
<dbReference type="InParanoid" id="Q9LVG1"/>
<dbReference type="PhylomeDB" id="Q9LVG1"/>
<dbReference type="PRO" id="PR:Q9LVG1"/>
<dbReference type="Proteomes" id="UP000006548">
    <property type="component" value="Chromosome 5"/>
</dbReference>
<dbReference type="ExpressionAtlas" id="Q9LVG1">
    <property type="expression patterns" value="baseline and differential"/>
</dbReference>
<dbReference type="GO" id="GO:0005634">
    <property type="term" value="C:nucleus"/>
    <property type="evidence" value="ECO:0007669"/>
    <property type="project" value="UniProtKB-SubCell"/>
</dbReference>
<dbReference type="GO" id="GO:0003677">
    <property type="term" value="F:DNA binding"/>
    <property type="evidence" value="ECO:0007669"/>
    <property type="project" value="UniProtKB-KW"/>
</dbReference>
<dbReference type="CDD" id="cd10017">
    <property type="entry name" value="B3_DNA"/>
    <property type="match status" value="1"/>
</dbReference>
<dbReference type="Gene3D" id="2.40.330.10">
    <property type="entry name" value="DNA-binding pseudobarrel domain"/>
    <property type="match status" value="2"/>
</dbReference>
<dbReference type="InterPro" id="IPR003340">
    <property type="entry name" value="B3_DNA-bd"/>
</dbReference>
<dbReference type="InterPro" id="IPR015300">
    <property type="entry name" value="DNA-bd_pseudobarrel_sf"/>
</dbReference>
<dbReference type="InterPro" id="IPR050655">
    <property type="entry name" value="Plant_B3_domain"/>
</dbReference>
<dbReference type="PANTHER" id="PTHR31920">
    <property type="entry name" value="B3 DOMAIN-CONTAINING"/>
    <property type="match status" value="1"/>
</dbReference>
<dbReference type="PANTHER" id="PTHR31920:SF32">
    <property type="entry name" value="B3 DOMAIN-CONTAINING PROTEIN REM22"/>
    <property type="match status" value="1"/>
</dbReference>
<dbReference type="Pfam" id="PF02362">
    <property type="entry name" value="B3"/>
    <property type="match status" value="1"/>
</dbReference>
<dbReference type="SMART" id="SM01019">
    <property type="entry name" value="B3"/>
    <property type="match status" value="1"/>
</dbReference>
<dbReference type="SUPFAM" id="SSF101936">
    <property type="entry name" value="DNA-binding pseudobarrel domain"/>
    <property type="match status" value="2"/>
</dbReference>
<dbReference type="PROSITE" id="PS50863">
    <property type="entry name" value="B3"/>
    <property type="match status" value="1"/>
</dbReference>
<comment type="subcellular location">
    <subcellularLocation>
        <location evidence="1">Nucleus</location>
    </subcellularLocation>
</comment>
<comment type="alternative products">
    <event type="alternative splicing"/>
    <isoform>
        <id>Q9LVG1-1</id>
        <name>1</name>
        <sequence type="displayed"/>
    </isoform>
    <text>A number of isoforms are produced. According to EST sequences.</text>
</comment>
<comment type="sequence caution" evidence="3">
    <conflict type="erroneous gene model prediction">
        <sequence resource="EMBL-CDS" id="AED97283"/>
    </conflict>
</comment>
<protein>
    <recommendedName>
        <fullName>B3 domain-containing protein At5g60130</fullName>
    </recommendedName>
</protein>
<sequence length="326" mass="37181">MNKGVSLDNCVPKFFKVYLPDESGDDMVLPISFTRFLPKSLPETVTVRSISGNIWKLELKKCCGDDDTEKFVMVNGWKRIVKDEDLKGGDFLEFEFDGSSCFHFCIYEHRTMCKKIRRSSDQSEEIKVESDSDEQNQASDDVLSLDEDDDDSDYNCGEDNDSDDYADEAAVEKDDNDADDEDVDNVADDVPVEDDDYVEAFDSRDHAKADDDDEDERQYLDDRENPSFTLILNPKKKSQLLIPARVIKDYDLHFPESITLVDPLVKKFGTLEKQIKIQTNGSVFVKGFGSIIRRNKVKTTDKMIFEIKKTGDNNLVQTIKIHIISG</sequence>
<feature type="chain" id="PRO_0000375149" description="B3 domain-containing protein At5g60130">
    <location>
        <begin position="1"/>
        <end position="326"/>
    </location>
</feature>
<feature type="DNA-binding region" description="TF-B3" evidence="1">
    <location>
        <begin position="12"/>
        <end position="110"/>
    </location>
</feature>
<feature type="region of interest" description="Disordered" evidence="2">
    <location>
        <begin position="124"/>
        <end position="222"/>
    </location>
</feature>
<feature type="compositionally biased region" description="Acidic residues" evidence="2">
    <location>
        <begin position="143"/>
        <end position="199"/>
    </location>
</feature>
<keyword id="KW-0025">Alternative splicing</keyword>
<keyword id="KW-0238">DNA-binding</keyword>
<keyword id="KW-0539">Nucleus</keyword>
<keyword id="KW-1185">Reference proteome</keyword>
<keyword id="KW-0804">Transcription</keyword>
<keyword id="KW-0805">Transcription regulation</keyword>
<evidence type="ECO:0000255" key="1">
    <source>
        <dbReference type="PROSITE-ProRule" id="PRU00326"/>
    </source>
</evidence>
<evidence type="ECO:0000256" key="2">
    <source>
        <dbReference type="SAM" id="MobiDB-lite"/>
    </source>
</evidence>
<evidence type="ECO:0000305" key="3"/>
<accession>Q9LVG1</accession>
<accession>F4JXH1</accession>
<accession>F4JXH2</accession>
<accession>Q4PSA6</accession>
<name>Y5013_ARATH</name>
<gene>
    <name type="ordered locus">At5g60130</name>
    <name type="ORF">MGO3.11</name>
</gene>
<organism>
    <name type="scientific">Arabidopsis thaliana</name>
    <name type="common">Mouse-ear cress</name>
    <dbReference type="NCBI Taxonomy" id="3702"/>
    <lineage>
        <taxon>Eukaryota</taxon>
        <taxon>Viridiplantae</taxon>
        <taxon>Streptophyta</taxon>
        <taxon>Embryophyta</taxon>
        <taxon>Tracheophyta</taxon>
        <taxon>Spermatophyta</taxon>
        <taxon>Magnoliopsida</taxon>
        <taxon>eudicotyledons</taxon>
        <taxon>Gunneridae</taxon>
        <taxon>Pentapetalae</taxon>
        <taxon>rosids</taxon>
        <taxon>malvids</taxon>
        <taxon>Brassicales</taxon>
        <taxon>Brassicaceae</taxon>
        <taxon>Camelineae</taxon>
        <taxon>Arabidopsis</taxon>
    </lineage>
</organism>
<proteinExistence type="evidence at transcript level"/>